<organism>
    <name type="scientific">Staphylococcus carnosus (strain TM300)</name>
    <dbReference type="NCBI Taxonomy" id="396513"/>
    <lineage>
        <taxon>Bacteria</taxon>
        <taxon>Bacillati</taxon>
        <taxon>Bacillota</taxon>
        <taxon>Bacilli</taxon>
        <taxon>Bacillales</taxon>
        <taxon>Staphylococcaceae</taxon>
        <taxon>Staphylococcus</taxon>
    </lineage>
</organism>
<proteinExistence type="inferred from homology"/>
<accession>B9DMD1</accession>
<keyword id="KW-0963">Cytoplasm</keyword>
<keyword id="KW-0488">Methylation</keyword>
<keyword id="KW-0648">Protein biosynthesis</keyword>
<keyword id="KW-1185">Reference proteome</keyword>
<evidence type="ECO:0000255" key="1">
    <source>
        <dbReference type="HAMAP-Rule" id="MF_00093"/>
    </source>
</evidence>
<name>RF1_STACT</name>
<gene>
    <name evidence="1" type="primary">prfA</name>
    <name type="ordered locus">Sca_1621</name>
</gene>
<comment type="function">
    <text evidence="1">Peptide chain release factor 1 directs the termination of translation in response to the peptide chain termination codons UAG and UAA.</text>
</comment>
<comment type="subcellular location">
    <subcellularLocation>
        <location evidence="1">Cytoplasm</location>
    </subcellularLocation>
</comment>
<comment type="PTM">
    <text evidence="1">Methylated by PrmC. Methylation increases the termination efficiency of RF1.</text>
</comment>
<comment type="similarity">
    <text evidence="1">Belongs to the prokaryotic/mitochondrial release factor family.</text>
</comment>
<feature type="chain" id="PRO_1000193504" description="Peptide chain release factor 1">
    <location>
        <begin position="1"/>
        <end position="358"/>
    </location>
</feature>
<feature type="modified residue" description="N5-methylglutamine" evidence="1">
    <location>
        <position position="233"/>
    </location>
</feature>
<sequence length="358" mass="40494">MFDQLDIVEERYEQLNELLSDPDVVSDSNKLREYSKEQSDLQKTVDVYRQYKQNKEDIDEIVEMLSETSDKEEVDMLKADMNELKDTLPGLEEELKMLLIPKDPNDDKNVVVEIRAAAGGDEAAIFAGDLYRMYTRFSEGLGYKTGVIEMNDSDHGGFKEISFTINGQGAYSKLKYENGAHRVQRVPETESGGRIHTSTATVAVLPEAEDVEVDIKDADLKIETYRSSGAGGQHVNTTDSAVRITHLPTGIIATSSEKSQIQNREKALKVLKARVYDMKLQEEQEKYDSERKSAVGTGDRSERIRTYNYPQNRVTDHRIGLTIQKLDQIVEGKLDEIIDALTMSEQTEKLKELNNVDL</sequence>
<protein>
    <recommendedName>
        <fullName evidence="1">Peptide chain release factor 1</fullName>
        <shortName evidence="1">RF-1</shortName>
    </recommendedName>
</protein>
<dbReference type="EMBL" id="AM295250">
    <property type="protein sequence ID" value="CAL28527.1"/>
    <property type="molecule type" value="Genomic_DNA"/>
</dbReference>
<dbReference type="RefSeq" id="WP_015900867.1">
    <property type="nucleotide sequence ID" value="NC_012121.1"/>
</dbReference>
<dbReference type="SMR" id="B9DMD1"/>
<dbReference type="KEGG" id="sca:SCA_1621"/>
<dbReference type="eggNOG" id="COG0216">
    <property type="taxonomic scope" value="Bacteria"/>
</dbReference>
<dbReference type="HOGENOM" id="CLU_036856_0_1_9"/>
<dbReference type="OrthoDB" id="9806673at2"/>
<dbReference type="BioCyc" id="SCAR396513:SCA_RS08235-MONOMER"/>
<dbReference type="Proteomes" id="UP000000444">
    <property type="component" value="Chromosome"/>
</dbReference>
<dbReference type="GO" id="GO:0005737">
    <property type="term" value="C:cytoplasm"/>
    <property type="evidence" value="ECO:0007669"/>
    <property type="project" value="UniProtKB-SubCell"/>
</dbReference>
<dbReference type="GO" id="GO:0016149">
    <property type="term" value="F:translation release factor activity, codon specific"/>
    <property type="evidence" value="ECO:0007669"/>
    <property type="project" value="UniProtKB-UniRule"/>
</dbReference>
<dbReference type="FunFam" id="3.30.160.20:FF:000004">
    <property type="entry name" value="Peptide chain release factor 1"/>
    <property type="match status" value="1"/>
</dbReference>
<dbReference type="FunFam" id="3.30.70.1660:FF:000002">
    <property type="entry name" value="Peptide chain release factor 1"/>
    <property type="match status" value="1"/>
</dbReference>
<dbReference type="FunFam" id="3.30.70.1660:FF:000004">
    <property type="entry name" value="Peptide chain release factor 1"/>
    <property type="match status" value="1"/>
</dbReference>
<dbReference type="Gene3D" id="3.30.160.20">
    <property type="match status" value="1"/>
</dbReference>
<dbReference type="Gene3D" id="3.30.70.1660">
    <property type="match status" value="1"/>
</dbReference>
<dbReference type="Gene3D" id="6.10.140.1950">
    <property type="match status" value="1"/>
</dbReference>
<dbReference type="HAMAP" id="MF_00093">
    <property type="entry name" value="Rel_fac_1"/>
    <property type="match status" value="1"/>
</dbReference>
<dbReference type="InterPro" id="IPR005139">
    <property type="entry name" value="PCRF"/>
</dbReference>
<dbReference type="InterPro" id="IPR000352">
    <property type="entry name" value="Pep_chain_release_fac_I"/>
</dbReference>
<dbReference type="InterPro" id="IPR045853">
    <property type="entry name" value="Pep_chain_release_fac_I_sf"/>
</dbReference>
<dbReference type="InterPro" id="IPR050057">
    <property type="entry name" value="Prokaryotic/Mito_RF"/>
</dbReference>
<dbReference type="InterPro" id="IPR004373">
    <property type="entry name" value="RF-1"/>
</dbReference>
<dbReference type="NCBIfam" id="TIGR00019">
    <property type="entry name" value="prfA"/>
    <property type="match status" value="1"/>
</dbReference>
<dbReference type="NCBIfam" id="NF001859">
    <property type="entry name" value="PRK00591.1"/>
    <property type="match status" value="1"/>
</dbReference>
<dbReference type="PANTHER" id="PTHR43804">
    <property type="entry name" value="LD18447P"/>
    <property type="match status" value="1"/>
</dbReference>
<dbReference type="PANTHER" id="PTHR43804:SF7">
    <property type="entry name" value="LD18447P"/>
    <property type="match status" value="1"/>
</dbReference>
<dbReference type="Pfam" id="PF03462">
    <property type="entry name" value="PCRF"/>
    <property type="match status" value="1"/>
</dbReference>
<dbReference type="Pfam" id="PF00472">
    <property type="entry name" value="RF-1"/>
    <property type="match status" value="1"/>
</dbReference>
<dbReference type="SMART" id="SM00937">
    <property type="entry name" value="PCRF"/>
    <property type="match status" value="1"/>
</dbReference>
<dbReference type="SUPFAM" id="SSF75620">
    <property type="entry name" value="Release factor"/>
    <property type="match status" value="1"/>
</dbReference>
<dbReference type="PROSITE" id="PS00745">
    <property type="entry name" value="RF_PROK_I"/>
    <property type="match status" value="1"/>
</dbReference>
<reference key="1">
    <citation type="journal article" date="2009" name="Appl. Environ. Microbiol.">
        <title>Genome analysis of the meat starter culture bacterium Staphylococcus carnosus TM300.</title>
        <authorList>
            <person name="Rosenstein R."/>
            <person name="Nerz C."/>
            <person name="Biswas L."/>
            <person name="Resch A."/>
            <person name="Raddatz G."/>
            <person name="Schuster S.C."/>
            <person name="Goetz F."/>
        </authorList>
    </citation>
    <scope>NUCLEOTIDE SEQUENCE [LARGE SCALE GENOMIC DNA]</scope>
    <source>
        <strain>TM300</strain>
    </source>
</reference>